<organismHost>
    <name type="scientific">Homo sapiens</name>
    <name type="common">Human</name>
    <dbReference type="NCBI Taxonomy" id="9606"/>
</organismHost>
<proteinExistence type="evidence at transcript level"/>
<gene>
    <name type="primary">P/V</name>
</gene>
<reference key="1">
    <citation type="journal article" date="1992" name="Biochim. Biophys. Acta">
        <title>Complete nucleotide sequence of the phosphoprotein of the Yamagata-1 strain of a defective subacute sclerosing panencephalitis (SSPE) virus.</title>
        <authorList>
            <person name="Komase K."/>
            <person name="Haga T."/>
            <person name="Yoshikawa Y."/>
            <person name="Yamanouchi K."/>
        </authorList>
    </citation>
    <scope>NUCLEOTIDE SEQUENCE [MRNA]</scope>
    <scope>RNA EDITING</scope>
</reference>
<protein>
    <recommendedName>
        <fullName>Phosphoprotein</fullName>
        <shortName>Protein P</shortName>
    </recommendedName>
</protein>
<evidence type="ECO:0000250" key="1">
    <source>
        <dbReference type="UniProtKB" id="P06162"/>
    </source>
</evidence>
<evidence type="ECO:0000250" key="2">
    <source>
        <dbReference type="UniProtKB" id="Q77M42"/>
    </source>
</evidence>
<evidence type="ECO:0000250" key="3">
    <source>
        <dbReference type="UniProtKB" id="Q83623"/>
    </source>
</evidence>
<evidence type="ECO:0000250" key="4">
    <source>
        <dbReference type="UniProtKB" id="Q9WMB4"/>
    </source>
</evidence>
<evidence type="ECO:0000256" key="5">
    <source>
        <dbReference type="SAM" id="MobiDB-lite"/>
    </source>
</evidence>
<evidence type="ECO:0000269" key="6">
    <source>
    </source>
</evidence>
<evidence type="ECO:0000305" key="7"/>
<sequence length="507" mass="54019">MAEEQARHVKNGLECIRALKAEPIGSLAIGEAMAAWSEISDNPGQERATYKEEKAGGSGLSKPCLSAIGSTEGGAPRIRGQGSGESDDDTETLGIPSRNLQASSTGLQCHYVYDHSGEAVKGIQDADSIMVQSGLDGDSTLSEGDNESENSDVDIGEPDTEGYAITDRGSAPISMGFRASDVETAEGGEIHELLRLQSRGNNFPKLGKTLNVPPPPDPGRASTSETPIKKGTDARLASFGTEIASLLTGGATQCARKSPSEPSGPGAPAGNVPECVSNAALIQEWTPESGTTISPRSQNNKEGGDHYDDELFSDIQDIKTALAKIHEDNQKIISKLESLLLLKGEVESIKKQINKQNISISTLEGHLSSIMIAIPGLGKDPNDPTADVEINPDLKPIIGRDSGRALAEVLKKPVASRQLQGMTNGRTSSRGQLLKEFQLKPIGKKMSSAVGFVPDTGPVSRSVIRSIIKSSRIEEDRKRYLMTLLDDIKGANDLSKFHQMLMKIIMK</sequence>
<keyword id="KW-0597">Phosphoprotein</keyword>
<keyword id="KW-0691">RNA editing</keyword>
<keyword id="KW-0693">Viral RNA replication</keyword>
<dbReference type="EMBL" id="D10635">
    <property type="protein sequence ID" value="BAA01483.1"/>
    <property type="molecule type" value="mRNA"/>
</dbReference>
<dbReference type="PIR" id="S20828">
    <property type="entry name" value="S20828"/>
</dbReference>
<dbReference type="SMR" id="Q00793"/>
<dbReference type="GO" id="GO:0003723">
    <property type="term" value="F:RNA binding"/>
    <property type="evidence" value="ECO:0007669"/>
    <property type="project" value="InterPro"/>
</dbReference>
<dbReference type="GO" id="GO:0003968">
    <property type="term" value="F:RNA-directed RNA polymerase activity"/>
    <property type="evidence" value="ECO:0007669"/>
    <property type="project" value="InterPro"/>
</dbReference>
<dbReference type="GO" id="GO:0006351">
    <property type="term" value="P:DNA-templated transcription"/>
    <property type="evidence" value="ECO:0007669"/>
    <property type="project" value="InterPro"/>
</dbReference>
<dbReference type="GO" id="GO:0019079">
    <property type="term" value="P:viral genome replication"/>
    <property type="evidence" value="ECO:0007669"/>
    <property type="project" value="InterPro"/>
</dbReference>
<dbReference type="CDD" id="cd21031">
    <property type="entry name" value="MEV_P-protein-C_like"/>
    <property type="match status" value="1"/>
</dbReference>
<dbReference type="Gene3D" id="1.20.5.110">
    <property type="match status" value="1"/>
</dbReference>
<dbReference type="Gene3D" id="1.10.8.10">
    <property type="entry name" value="DNA helicase RuvA subunit, C-terminal domain"/>
    <property type="match status" value="1"/>
</dbReference>
<dbReference type="InterPro" id="IPR004897">
    <property type="entry name" value="P/V_Pprotein_paramyxoviral"/>
</dbReference>
<dbReference type="InterPro" id="IPR028243">
    <property type="entry name" value="Paramyxo_P/V_N"/>
</dbReference>
<dbReference type="InterPro" id="IPR016075">
    <property type="entry name" value="RNA_pol_Pprot-P_XD_paramyxovir"/>
</dbReference>
<dbReference type="Pfam" id="PF03210">
    <property type="entry name" value="Paramyx_P_V_C"/>
    <property type="match status" value="1"/>
</dbReference>
<dbReference type="Pfam" id="PF13825">
    <property type="entry name" value="Paramyxo_P_V_N"/>
    <property type="match status" value="1"/>
</dbReference>
<dbReference type="SUPFAM" id="SSF101089">
    <property type="entry name" value="Phosphoprotein XD domain"/>
    <property type="match status" value="1"/>
</dbReference>
<feature type="chain" id="PRO_0000142692" description="Phosphoprotein">
    <location>
        <begin position="1"/>
        <end position="507"/>
    </location>
</feature>
<feature type="region of interest" description="Interaction with N0" evidence="2">
    <location>
        <begin position="1"/>
        <end position="48"/>
    </location>
</feature>
<feature type="region of interest" description="Disordered" evidence="5">
    <location>
        <begin position="42"/>
        <end position="91"/>
    </location>
</feature>
<feature type="region of interest" description="Disordered" evidence="5">
    <location>
        <begin position="133"/>
        <end position="163"/>
    </location>
</feature>
<feature type="region of interest" description="Disordered" evidence="5">
    <location>
        <begin position="201"/>
        <end position="227"/>
    </location>
</feature>
<feature type="region of interest" description="Disordered" evidence="5">
    <location>
        <begin position="252"/>
        <end position="273"/>
    </location>
</feature>
<feature type="region of interest" description="Disordered" evidence="5">
    <location>
        <begin position="285"/>
        <end position="307"/>
    </location>
</feature>
<feature type="region of interest" description="Multimerization" evidence="2">
    <location>
        <begin position="304"/>
        <end position="376"/>
    </location>
</feature>
<feature type="region of interest" description="Interaction with the L polymerase" evidence="4">
    <location>
        <begin position="361"/>
        <end position="377"/>
    </location>
</feature>
<feature type="region of interest" description="Interaction with the L polymerase" evidence="4">
    <location>
        <begin position="396"/>
        <end position="410"/>
    </location>
</feature>
<feature type="region of interest" description="X domain (XD)" evidence="4">
    <location>
        <begin position="457"/>
        <end position="507"/>
    </location>
</feature>
<feature type="region of interest" description="Interaction with the nucleocapsid (N-RNA)" evidence="2">
    <location>
        <begin position="459"/>
        <end position="507"/>
    </location>
</feature>
<feature type="compositionally biased region" description="Acidic residues" evidence="5">
    <location>
        <begin position="144"/>
        <end position="160"/>
    </location>
</feature>
<feature type="compositionally biased region" description="Low complexity" evidence="5">
    <location>
        <begin position="260"/>
        <end position="270"/>
    </location>
</feature>
<feature type="compositionally biased region" description="Polar residues" evidence="5">
    <location>
        <begin position="286"/>
        <end position="301"/>
    </location>
</feature>
<feature type="modified residue" description="Phosphoserine" evidence="2">
    <location>
        <position position="86"/>
    </location>
</feature>
<feature type="modified residue" description="Phosphoserine" evidence="2">
    <location>
        <position position="151"/>
    </location>
</feature>
<comment type="function">
    <text evidence="1 2">Essential cofactor of the RNA polymerase L that plays a central role in the transcription and replication by forming the polymerase complex with RNA polymerase L and recruiting L to the genomic N-RNA template for RNA synthesis (By similarity). Also plays a central role in the encapsidation of nascent RNA chains by forming the encapsidation complex with the nucleocapsid protein N (N-P complex). Acts as a chaperone for newly synthesized free N protein, so-called N0, allowing encapsidation of nascent RNA chains during replication (By similarity). The nucleoprotein protein N prevents excessive phosphorylation of P, which leads to down-regulation of viral transcription/ replication. Participates, together with N, in the formation of viral factories (viroplasms), which are large inclusions in the host cytoplasm where replication takes place (By similarity).</text>
</comment>
<comment type="subunit">
    <text evidence="2 3 4">Homotetramer (By similarity). Interacts (via multimerization domain and XD domain) with polymerase L; this interaction forms the polymerase L-P complex (By similarity). Interacts (via N-terminus) with N0 (via Ncore); this interaction allows P to chaperon N0 to avoid N polymerization and non-specific RNA binding before encapsidation (By similarity). Interacts (via C-terminus) with N-RNA template (via Ntail); this interaction maintains the P/L complex anchored to the nucleocapsid template during the sequential transcription (By similarity). Interacts (via C-terminus) with protein C this interaction allows C to associate with the ribonucleocapsid (By similarity).</text>
</comment>
<comment type="domain">
    <text evidence="3 4">The N-terminus consists of a long intrinsically disordered tail. The central part contains the coiled-coil multimerization domain (MD) (By similarity). Forms a four-stranded coiled coil structure (By similarity). The C-terminus constitutes the alpha-helical domain (XD) that binds to the nucleocapsid (N-RNA complex) (By similarity).</text>
</comment>
<comment type="PTM">
    <text evidence="2">Phosphorylation on serines by host CK2 is necessary for the formation of viral factories.</text>
</comment>
<comment type="RNA editing">
    <location>
        <position position="231" evidence="6"/>
    </location>
    <text evidence="7">Partially edited. RNA editing at this position consists of an insertion of one guanine nucleotide. The sequence displayed here is the P protein, derived from the unedited RNA. The edited RNA gives rise to the V protein (AC P60168) (Probable).</text>
</comment>
<comment type="similarity">
    <text evidence="7">Belongs to the morbillivirus P protein family.</text>
</comment>
<organism>
    <name type="scientific">Measles virus (strain Yamagata-1)</name>
    <name type="common">MeV</name>
    <name type="synonym">Subacute sclerose panencephalitis virus</name>
    <dbReference type="NCBI Taxonomy" id="11239"/>
    <lineage>
        <taxon>Viruses</taxon>
        <taxon>Riboviria</taxon>
        <taxon>Orthornavirae</taxon>
        <taxon>Negarnaviricota</taxon>
        <taxon>Haploviricotina</taxon>
        <taxon>Monjiviricetes</taxon>
        <taxon>Mononegavirales</taxon>
        <taxon>Paramyxoviridae</taxon>
        <taxon>Orthoparamyxovirinae</taxon>
        <taxon>Morbillivirus</taxon>
        <taxon>Morbillivirus hominis</taxon>
        <taxon>Measles morbillivirus</taxon>
    </lineage>
</organism>
<accession>Q00793</accession>
<name>PHOSP_MEASY</name>